<accession>B7J1Z1</accession>
<sequence length="186" mass="21382">MDRYFFLQDATTVAKLLLGNLLIRKIDKEEIVTRIVETEAYMGITDSACHSYGGKITNRTSAMYRIGGYSYVYIIYGMHYMFNVVTADKNNPQAVLIRSVEPISPLLGEKSILTNGPGKLTKFLNIDLTFNKVDLIGNNELFLQRGLNLDFNIVCSKRININYAQESDINKLWRFYIKDNKFVSRR</sequence>
<proteinExistence type="inferred from homology"/>
<name>3MGH_BORBZ</name>
<reference key="1">
    <citation type="journal article" date="2011" name="J. Bacteriol.">
        <title>Whole-genome sequences of thirteen isolates of Borrelia burgdorferi.</title>
        <authorList>
            <person name="Schutzer S.E."/>
            <person name="Fraser-Liggett C.M."/>
            <person name="Casjens S.R."/>
            <person name="Qiu W.G."/>
            <person name="Dunn J.J."/>
            <person name="Mongodin E.F."/>
            <person name="Luft B.J."/>
        </authorList>
    </citation>
    <scope>NUCLEOTIDE SEQUENCE [LARGE SCALE GENOMIC DNA]</scope>
    <source>
        <strain>ZS7</strain>
    </source>
</reference>
<dbReference type="EC" id="3.2.2.-" evidence="1"/>
<dbReference type="EMBL" id="CP001205">
    <property type="protein sequence ID" value="ACK74742.1"/>
    <property type="molecule type" value="Genomic_DNA"/>
</dbReference>
<dbReference type="RefSeq" id="WP_002657895.1">
    <property type="nucleotide sequence ID" value="NC_011728.1"/>
</dbReference>
<dbReference type="SMR" id="B7J1Z1"/>
<dbReference type="KEGG" id="bbz:BbuZS7_0428"/>
<dbReference type="HOGENOM" id="CLU_060471_0_2_12"/>
<dbReference type="Proteomes" id="UP000006901">
    <property type="component" value="Chromosome"/>
</dbReference>
<dbReference type="GO" id="GO:0003905">
    <property type="term" value="F:alkylbase DNA N-glycosylase activity"/>
    <property type="evidence" value="ECO:0007669"/>
    <property type="project" value="InterPro"/>
</dbReference>
<dbReference type="GO" id="GO:0003677">
    <property type="term" value="F:DNA binding"/>
    <property type="evidence" value="ECO:0007669"/>
    <property type="project" value="InterPro"/>
</dbReference>
<dbReference type="GO" id="GO:0006284">
    <property type="term" value="P:base-excision repair"/>
    <property type="evidence" value="ECO:0007669"/>
    <property type="project" value="InterPro"/>
</dbReference>
<dbReference type="CDD" id="cd00540">
    <property type="entry name" value="AAG"/>
    <property type="match status" value="1"/>
</dbReference>
<dbReference type="FunFam" id="3.10.300.10:FF:000001">
    <property type="entry name" value="Putative 3-methyladenine DNA glycosylase"/>
    <property type="match status" value="1"/>
</dbReference>
<dbReference type="Gene3D" id="3.10.300.10">
    <property type="entry name" value="Methylpurine-DNA glycosylase (MPG)"/>
    <property type="match status" value="1"/>
</dbReference>
<dbReference type="HAMAP" id="MF_00527">
    <property type="entry name" value="3MGH"/>
    <property type="match status" value="1"/>
</dbReference>
<dbReference type="InterPro" id="IPR011034">
    <property type="entry name" value="Formyl_transferase-like_C_sf"/>
</dbReference>
<dbReference type="InterPro" id="IPR003180">
    <property type="entry name" value="MPG"/>
</dbReference>
<dbReference type="InterPro" id="IPR036995">
    <property type="entry name" value="MPG_sf"/>
</dbReference>
<dbReference type="NCBIfam" id="TIGR00567">
    <property type="entry name" value="3mg"/>
    <property type="match status" value="1"/>
</dbReference>
<dbReference type="PANTHER" id="PTHR10429">
    <property type="entry name" value="DNA-3-METHYLADENINE GLYCOSYLASE"/>
    <property type="match status" value="1"/>
</dbReference>
<dbReference type="PANTHER" id="PTHR10429:SF0">
    <property type="entry name" value="DNA-3-METHYLADENINE GLYCOSYLASE"/>
    <property type="match status" value="1"/>
</dbReference>
<dbReference type="Pfam" id="PF02245">
    <property type="entry name" value="Pur_DNA_glyco"/>
    <property type="match status" value="1"/>
</dbReference>
<dbReference type="SUPFAM" id="SSF50486">
    <property type="entry name" value="FMT C-terminal domain-like"/>
    <property type="match status" value="1"/>
</dbReference>
<feature type="chain" id="PRO_1000127750" description="Putative 3-methyladenine DNA glycosylase">
    <location>
        <begin position="1"/>
        <end position="186"/>
    </location>
</feature>
<keyword id="KW-0227">DNA damage</keyword>
<keyword id="KW-0234">DNA repair</keyword>
<keyword id="KW-0378">Hydrolase</keyword>
<organism>
    <name type="scientific">Borreliella burgdorferi (strain ZS7)</name>
    <name type="common">Borrelia burgdorferi</name>
    <dbReference type="NCBI Taxonomy" id="445985"/>
    <lineage>
        <taxon>Bacteria</taxon>
        <taxon>Pseudomonadati</taxon>
        <taxon>Spirochaetota</taxon>
        <taxon>Spirochaetia</taxon>
        <taxon>Spirochaetales</taxon>
        <taxon>Borreliaceae</taxon>
        <taxon>Borreliella</taxon>
    </lineage>
</organism>
<protein>
    <recommendedName>
        <fullName evidence="1">Putative 3-methyladenine DNA glycosylase</fullName>
        <ecNumber evidence="1">3.2.2.-</ecNumber>
    </recommendedName>
</protein>
<evidence type="ECO:0000255" key="1">
    <source>
        <dbReference type="HAMAP-Rule" id="MF_00527"/>
    </source>
</evidence>
<gene>
    <name type="ordered locus">BbuZS7_0428</name>
</gene>
<comment type="similarity">
    <text evidence="1">Belongs to the DNA glycosylase MPG family.</text>
</comment>